<dbReference type="EMBL" id="AK011021">
    <property type="protein sequence ID" value="BAB27338.1"/>
    <property type="molecule type" value="mRNA"/>
</dbReference>
<dbReference type="EMBL" id="AK149137">
    <property type="protein sequence ID" value="BAE28747.1"/>
    <property type="molecule type" value="mRNA"/>
</dbReference>
<dbReference type="EMBL" id="AK168159">
    <property type="protein sequence ID" value="BAE40122.1"/>
    <property type="molecule type" value="mRNA"/>
</dbReference>
<dbReference type="CCDS" id="CCDS52446.1"/>
<dbReference type="RefSeq" id="NP_079869.1">
    <property type="nucleotide sequence ID" value="NM_025593.1"/>
</dbReference>
<dbReference type="SMR" id="P62876"/>
<dbReference type="FunCoup" id="P62876">
    <property type="interactions" value="1425"/>
</dbReference>
<dbReference type="IntAct" id="P62876">
    <property type="interactions" value="1"/>
</dbReference>
<dbReference type="MINT" id="P62876"/>
<dbReference type="STRING" id="10090.ENSMUSP00000043204"/>
<dbReference type="iPTMnet" id="P62876"/>
<dbReference type="PhosphoSitePlus" id="P62876"/>
<dbReference type="PaxDb" id="10090-ENSMUSP00000043204"/>
<dbReference type="ProteomicsDB" id="260834"/>
<dbReference type="Pumba" id="P62876"/>
<dbReference type="Antibodypedia" id="22712">
    <property type="antibodies" value="110 antibodies from 22 providers"/>
</dbReference>
<dbReference type="Ensembl" id="ENSMUST00000043870.9">
    <property type="protein sequence ID" value="ENSMUSP00000043204.9"/>
    <property type="gene ID" value="ENSMUSG00000038489.9"/>
</dbReference>
<dbReference type="GeneID" id="66491"/>
<dbReference type="KEGG" id="mmu:66491"/>
<dbReference type="UCSC" id="uc009klm.2">
    <property type="organism name" value="mouse"/>
</dbReference>
<dbReference type="AGR" id="MGI:1913741"/>
<dbReference type="CTD" id="5441"/>
<dbReference type="MGI" id="MGI:1913741">
    <property type="gene designation" value="Polr2l"/>
</dbReference>
<dbReference type="VEuPathDB" id="HostDB:ENSMUSG00000038489"/>
<dbReference type="eggNOG" id="KOG3497">
    <property type="taxonomic scope" value="Eukaryota"/>
</dbReference>
<dbReference type="GeneTree" id="ENSGT00390000007087"/>
<dbReference type="HOGENOM" id="CLU_143122_1_1_1"/>
<dbReference type="InParanoid" id="P62876"/>
<dbReference type="OMA" id="YCCRRMF"/>
<dbReference type="OrthoDB" id="10258858at2759"/>
<dbReference type="PhylomeDB" id="P62876"/>
<dbReference type="TreeFam" id="TF103046"/>
<dbReference type="Reactome" id="R-MMU-112382">
    <property type="pathway name" value="Formation of RNA Pol II elongation complex"/>
</dbReference>
<dbReference type="Reactome" id="R-MMU-113418">
    <property type="pathway name" value="Formation of the Early Elongation Complex"/>
</dbReference>
<dbReference type="Reactome" id="R-MMU-5250924">
    <property type="pathway name" value="B-WICH complex positively regulates rRNA expression"/>
</dbReference>
<dbReference type="Reactome" id="R-MMU-674695">
    <property type="pathway name" value="RNA Polymerase II Pre-transcription Events"/>
</dbReference>
<dbReference type="Reactome" id="R-MMU-6781823">
    <property type="pathway name" value="Formation of TC-NER Pre-Incision Complex"/>
</dbReference>
<dbReference type="Reactome" id="R-MMU-6782135">
    <property type="pathway name" value="Dual incision in TC-NER"/>
</dbReference>
<dbReference type="Reactome" id="R-MMU-6782210">
    <property type="pathway name" value="Gap-filling DNA repair synthesis and ligation in TC-NER"/>
</dbReference>
<dbReference type="Reactome" id="R-MMU-6796648">
    <property type="pathway name" value="TP53 Regulates Transcription of DNA Repair Genes"/>
</dbReference>
<dbReference type="Reactome" id="R-MMU-6803529">
    <property type="pathway name" value="FGFR2 alternative splicing"/>
</dbReference>
<dbReference type="Reactome" id="R-MMU-6807505">
    <property type="pathway name" value="RNA polymerase II transcribes snRNA genes"/>
</dbReference>
<dbReference type="Reactome" id="R-MMU-72086">
    <property type="pathway name" value="mRNA Capping"/>
</dbReference>
<dbReference type="Reactome" id="R-MMU-72163">
    <property type="pathway name" value="mRNA Splicing - Major Pathway"/>
</dbReference>
<dbReference type="Reactome" id="R-MMU-72165">
    <property type="pathway name" value="mRNA Splicing - Minor Pathway"/>
</dbReference>
<dbReference type="Reactome" id="R-MMU-72203">
    <property type="pathway name" value="Processing of Capped Intron-Containing Pre-mRNA"/>
</dbReference>
<dbReference type="Reactome" id="R-MMU-73762">
    <property type="pathway name" value="RNA Polymerase I Transcription Initiation"/>
</dbReference>
<dbReference type="Reactome" id="R-MMU-73772">
    <property type="pathway name" value="RNA Polymerase I Promoter Escape"/>
</dbReference>
<dbReference type="Reactome" id="R-MMU-73776">
    <property type="pathway name" value="RNA Polymerase II Promoter Escape"/>
</dbReference>
<dbReference type="Reactome" id="R-MMU-73779">
    <property type="pathway name" value="RNA Polymerase II Transcription Pre-Initiation And Promoter Opening"/>
</dbReference>
<dbReference type="Reactome" id="R-MMU-73863">
    <property type="pathway name" value="RNA Polymerase I Transcription Termination"/>
</dbReference>
<dbReference type="Reactome" id="R-MMU-75953">
    <property type="pathway name" value="RNA Polymerase II Transcription Initiation"/>
</dbReference>
<dbReference type="Reactome" id="R-MMU-75955">
    <property type="pathway name" value="RNA Polymerase II Transcription Elongation"/>
</dbReference>
<dbReference type="Reactome" id="R-MMU-76042">
    <property type="pathway name" value="RNA Polymerase II Transcription Initiation And Promoter Clearance"/>
</dbReference>
<dbReference type="Reactome" id="R-MMU-76061">
    <property type="pathway name" value="RNA Polymerase III Transcription Initiation From Type 1 Promoter"/>
</dbReference>
<dbReference type="Reactome" id="R-MMU-76066">
    <property type="pathway name" value="RNA Polymerase III Transcription Initiation From Type 2 Promoter"/>
</dbReference>
<dbReference type="Reactome" id="R-MMU-76071">
    <property type="pathway name" value="RNA Polymerase III Transcription Initiation From Type 3 Promoter"/>
</dbReference>
<dbReference type="Reactome" id="R-MMU-77075">
    <property type="pathway name" value="RNA Pol II CTD phosphorylation and interaction with CE"/>
</dbReference>
<dbReference type="Reactome" id="R-MMU-9018519">
    <property type="pathway name" value="Estrogen-dependent gene expression"/>
</dbReference>
<dbReference type="BioGRID-ORCS" id="66491">
    <property type="hits" value="28 hits in 75 CRISPR screens"/>
</dbReference>
<dbReference type="ChiTaRS" id="Polr2l">
    <property type="organism name" value="mouse"/>
</dbReference>
<dbReference type="PRO" id="PR:P62876"/>
<dbReference type="Proteomes" id="UP000000589">
    <property type="component" value="Chromosome 7"/>
</dbReference>
<dbReference type="RNAct" id="P62876">
    <property type="molecule type" value="protein"/>
</dbReference>
<dbReference type="Bgee" id="ENSMUSG00000038489">
    <property type="expression patterns" value="Expressed in blastoderm cell in morula and 118 other cell types or tissues"/>
</dbReference>
<dbReference type="GO" id="GO:0005634">
    <property type="term" value="C:nucleus"/>
    <property type="evidence" value="ECO:0000250"/>
    <property type="project" value="UniProtKB"/>
</dbReference>
<dbReference type="GO" id="GO:0005736">
    <property type="term" value="C:RNA polymerase I complex"/>
    <property type="evidence" value="ECO:0007669"/>
    <property type="project" value="Ensembl"/>
</dbReference>
<dbReference type="GO" id="GO:0005665">
    <property type="term" value="C:RNA polymerase II, core complex"/>
    <property type="evidence" value="ECO:0000250"/>
    <property type="project" value="UniProtKB"/>
</dbReference>
<dbReference type="GO" id="GO:0005666">
    <property type="term" value="C:RNA polymerase III complex"/>
    <property type="evidence" value="ECO:0007669"/>
    <property type="project" value="Ensembl"/>
</dbReference>
<dbReference type="GO" id="GO:0003677">
    <property type="term" value="F:DNA binding"/>
    <property type="evidence" value="ECO:0007669"/>
    <property type="project" value="InterPro"/>
</dbReference>
<dbReference type="GO" id="GO:0003899">
    <property type="term" value="F:DNA-directed RNA polymerase activity"/>
    <property type="evidence" value="ECO:0007669"/>
    <property type="project" value="InterPro"/>
</dbReference>
<dbReference type="GO" id="GO:0008270">
    <property type="term" value="F:zinc ion binding"/>
    <property type="evidence" value="ECO:0007669"/>
    <property type="project" value="Ensembl"/>
</dbReference>
<dbReference type="GO" id="GO:0006366">
    <property type="term" value="P:transcription by RNA polymerase II"/>
    <property type="evidence" value="ECO:0000250"/>
    <property type="project" value="UniProtKB"/>
</dbReference>
<dbReference type="FunFam" id="1.10.10.60:FF:000024">
    <property type="entry name" value="DNA-directed RNA polymerases I, II, and III subunit"/>
    <property type="match status" value="1"/>
</dbReference>
<dbReference type="Gene3D" id="1.10.10.60">
    <property type="entry name" value="Homeodomain-like"/>
    <property type="match status" value="1"/>
</dbReference>
<dbReference type="HAMAP" id="MF_00250">
    <property type="entry name" value="RNApol_arch_Rpo10"/>
    <property type="match status" value="1"/>
</dbReference>
<dbReference type="InterPro" id="IPR023580">
    <property type="entry name" value="RNA_pol_su_RPB10"/>
</dbReference>
<dbReference type="InterPro" id="IPR020789">
    <property type="entry name" value="RNA_pol_suN_Zn-BS"/>
</dbReference>
<dbReference type="InterPro" id="IPR000268">
    <property type="entry name" value="RPABC5/Rpb10"/>
</dbReference>
<dbReference type="NCBIfam" id="NF003089">
    <property type="entry name" value="PRK04016.1"/>
    <property type="match status" value="1"/>
</dbReference>
<dbReference type="PANTHER" id="PTHR23431:SF11">
    <property type="entry name" value="DNA-DIRECTED RNA POLYMERASES I, II, AND III SUBUNIT RPABC5"/>
    <property type="match status" value="1"/>
</dbReference>
<dbReference type="PANTHER" id="PTHR23431">
    <property type="entry name" value="DNA-DIRECTED RNA POLYMERASES I, II, AND III SUBUNIT RPABC5 FAMILY MEMBER"/>
    <property type="match status" value="1"/>
</dbReference>
<dbReference type="Pfam" id="PF01194">
    <property type="entry name" value="RNA_pol_N"/>
    <property type="match status" value="1"/>
</dbReference>
<dbReference type="PIRSF" id="PIRSF005653">
    <property type="entry name" value="RNA_pol_N/8_sub"/>
    <property type="match status" value="1"/>
</dbReference>
<dbReference type="SUPFAM" id="SSF46924">
    <property type="entry name" value="RNA polymerase subunit RPB10"/>
    <property type="match status" value="1"/>
</dbReference>
<dbReference type="PROSITE" id="PS01112">
    <property type="entry name" value="RNA_POL_N_8KD"/>
    <property type="match status" value="1"/>
</dbReference>
<sequence>MIIPVRCFTCGKIVGNKWEAYLGLLQAEYTEGDALDALGLKRYCCRRMLLAHVDLIEKLLNYAPLEK</sequence>
<organism>
    <name type="scientific">Mus musculus</name>
    <name type="common">Mouse</name>
    <dbReference type="NCBI Taxonomy" id="10090"/>
    <lineage>
        <taxon>Eukaryota</taxon>
        <taxon>Metazoa</taxon>
        <taxon>Chordata</taxon>
        <taxon>Craniata</taxon>
        <taxon>Vertebrata</taxon>
        <taxon>Euteleostomi</taxon>
        <taxon>Mammalia</taxon>
        <taxon>Eutheria</taxon>
        <taxon>Euarchontoglires</taxon>
        <taxon>Glires</taxon>
        <taxon>Rodentia</taxon>
        <taxon>Myomorpha</taxon>
        <taxon>Muroidea</taxon>
        <taxon>Muridae</taxon>
        <taxon>Murinae</taxon>
        <taxon>Mus</taxon>
        <taxon>Mus</taxon>
    </lineage>
</organism>
<accession>P62876</accession>
<accession>P52436</accession>
<accession>Q3UF14</accession>
<keyword id="KW-0240">DNA-directed RNA polymerase</keyword>
<keyword id="KW-0479">Metal-binding</keyword>
<keyword id="KW-0539">Nucleus</keyword>
<keyword id="KW-1185">Reference proteome</keyword>
<keyword id="KW-0804">Transcription</keyword>
<keyword id="KW-0862">Zinc</keyword>
<gene>
    <name type="primary">Polr2l</name>
</gene>
<comment type="function">
    <text evidence="1 2 3">DNA-dependent RNA polymerase catalyzes the transcription of DNA into RNA using the four ribonucleoside triphosphates as substrates. Common component of RNA polymerases I, II and III which synthesize ribosomal RNA precursors, mRNA precursors and many functional non-coding RNAs, and a small RNAs, such as 5S rRNA and tRNAs, respectively.</text>
</comment>
<comment type="subunit">
    <text evidence="2 3">Component of the RNA polymerase I (Pol I), RNA polymerase II (Pol II) and RNA polymerase III (Pol III) complexes consisting of at least 13, 12 and 17 subunits, respectively (By similarity). Pol I complex consists of a ten-subunit catalytic core composed of POLR1A/RPA1, POLR1B/RPA2, POLR1C/RPAC1, POLR1D/RPAC2, POLR1H/RPA12, POLR2E/RPABC1, POLR2F/RPABC2, POLR2H/RPABC3, POLR2K/RPABC4 and POLR2L/RPABC5; a mobile stalk subunit POLR1F/RPA43 protruding from the core and additional subunits homologous to general transcription factors POLR1E/RPA49 and POLR1G/RPA34. Part of Pol I pre-initiation complex (PIC), in which Pol I core assembles with RRN3 and promoter-bound UTBF and SL1/TIF-IB complex (By similarity). Pol II complex contains a ten-subunit catalytic core composed of POLR2A/RPB1, POLR2B/RPB2, POLR2C/RPB3, POLR2I/RPB9, POLR2J/RPB11, POLR2E/RPABC1, POLR2F/RPABC2, POLR2H/RPABC3, POLR2K/RPABC4 and POLR2L/RPABC5 and a mobile stalk composed of two subunits POLR2D/RPB4 and POLR2G/RPB7. Part of Pol II(G) complex, in which Pol II core associates with an additional subunit POLR2M; unlike conventional Pol II, Pol II(G) functions as a transcriptional repressor. Part of TBP-based Pol II pre-initiation complex (PIC), in which Pol II core assembles with general transcription factors and other specific initiation factors including GTF2E1, GTF2E2, GTF2F1, GTF2F2, TCEA1, ERCC2, ERCC3, GTF2H2, GTF2H3, GTF2H4, GTF2H5, GTF2A1, GTF2A2, GTF2B and TBP; this large multi-subunit PIC complex mediates DNA unwinding and targets Pol II core to the transcription start site where the first phosphodiester bond forms. Pol III complex consists of a ten-subunit catalytic core composed of POLR3A/RPC1, POLR3B/RPC2, POLR1C/RPAC1, POLR1D/RPAC2, POLR3K/RPC10, POLR2E/RPABC1, POLR2F/RPABC2, POLR2H/RPABC3, POLR2K/RPABC4 and POLR2L/RPABC5; a mobile stalk composed of two subunits POLR3H/RPC8 and CRCP/RPC9, protruding from the core and functioning primarily in transcription initiation; and additional subunits homologous to general transcription factors of the RNA polymerase II machinery, POLR3C/RPC3-POLR3F/RPC6-POLR3G/RPC7 heterotrimer required for transcription initiation and POLR3D/RPC4-POLR3E/RPC5 heterodimer involved in both transcription initiation and termination.</text>
</comment>
<comment type="subcellular location">
    <subcellularLocation>
        <location evidence="3">Nucleus</location>
    </subcellularLocation>
    <subcellularLocation>
        <location evidence="3">Nucleus</location>
        <location evidence="3">Nucleolus</location>
    </subcellularLocation>
</comment>
<comment type="similarity">
    <text evidence="4">Belongs to the archaeal Rpo10/eukaryotic RPB10 RNA polymerase subunit family.</text>
</comment>
<reference key="1">
    <citation type="journal article" date="2005" name="Science">
        <title>The transcriptional landscape of the mammalian genome.</title>
        <authorList>
            <person name="Carninci P."/>
            <person name="Kasukawa T."/>
            <person name="Katayama S."/>
            <person name="Gough J."/>
            <person name="Frith M.C."/>
            <person name="Maeda N."/>
            <person name="Oyama R."/>
            <person name="Ravasi T."/>
            <person name="Lenhard B."/>
            <person name="Wells C."/>
            <person name="Kodzius R."/>
            <person name="Shimokawa K."/>
            <person name="Bajic V.B."/>
            <person name="Brenner S.E."/>
            <person name="Batalov S."/>
            <person name="Forrest A.R."/>
            <person name="Zavolan M."/>
            <person name="Davis M.J."/>
            <person name="Wilming L.G."/>
            <person name="Aidinis V."/>
            <person name="Allen J.E."/>
            <person name="Ambesi-Impiombato A."/>
            <person name="Apweiler R."/>
            <person name="Aturaliya R.N."/>
            <person name="Bailey T.L."/>
            <person name="Bansal M."/>
            <person name="Baxter L."/>
            <person name="Beisel K.W."/>
            <person name="Bersano T."/>
            <person name="Bono H."/>
            <person name="Chalk A.M."/>
            <person name="Chiu K.P."/>
            <person name="Choudhary V."/>
            <person name="Christoffels A."/>
            <person name="Clutterbuck D.R."/>
            <person name="Crowe M.L."/>
            <person name="Dalla E."/>
            <person name="Dalrymple B.P."/>
            <person name="de Bono B."/>
            <person name="Della Gatta G."/>
            <person name="di Bernardo D."/>
            <person name="Down T."/>
            <person name="Engstrom P."/>
            <person name="Fagiolini M."/>
            <person name="Faulkner G."/>
            <person name="Fletcher C.F."/>
            <person name="Fukushima T."/>
            <person name="Furuno M."/>
            <person name="Futaki S."/>
            <person name="Gariboldi M."/>
            <person name="Georgii-Hemming P."/>
            <person name="Gingeras T.R."/>
            <person name="Gojobori T."/>
            <person name="Green R.E."/>
            <person name="Gustincich S."/>
            <person name="Harbers M."/>
            <person name="Hayashi Y."/>
            <person name="Hensch T.K."/>
            <person name="Hirokawa N."/>
            <person name="Hill D."/>
            <person name="Huminiecki L."/>
            <person name="Iacono M."/>
            <person name="Ikeo K."/>
            <person name="Iwama A."/>
            <person name="Ishikawa T."/>
            <person name="Jakt M."/>
            <person name="Kanapin A."/>
            <person name="Katoh M."/>
            <person name="Kawasawa Y."/>
            <person name="Kelso J."/>
            <person name="Kitamura H."/>
            <person name="Kitano H."/>
            <person name="Kollias G."/>
            <person name="Krishnan S.P."/>
            <person name="Kruger A."/>
            <person name="Kummerfeld S.K."/>
            <person name="Kurochkin I.V."/>
            <person name="Lareau L.F."/>
            <person name="Lazarevic D."/>
            <person name="Lipovich L."/>
            <person name="Liu J."/>
            <person name="Liuni S."/>
            <person name="McWilliam S."/>
            <person name="Madan Babu M."/>
            <person name="Madera M."/>
            <person name="Marchionni L."/>
            <person name="Matsuda H."/>
            <person name="Matsuzawa S."/>
            <person name="Miki H."/>
            <person name="Mignone F."/>
            <person name="Miyake S."/>
            <person name="Morris K."/>
            <person name="Mottagui-Tabar S."/>
            <person name="Mulder N."/>
            <person name="Nakano N."/>
            <person name="Nakauchi H."/>
            <person name="Ng P."/>
            <person name="Nilsson R."/>
            <person name="Nishiguchi S."/>
            <person name="Nishikawa S."/>
            <person name="Nori F."/>
            <person name="Ohara O."/>
            <person name="Okazaki Y."/>
            <person name="Orlando V."/>
            <person name="Pang K.C."/>
            <person name="Pavan W.J."/>
            <person name="Pavesi G."/>
            <person name="Pesole G."/>
            <person name="Petrovsky N."/>
            <person name="Piazza S."/>
            <person name="Reed J."/>
            <person name="Reid J.F."/>
            <person name="Ring B.Z."/>
            <person name="Ringwald M."/>
            <person name="Rost B."/>
            <person name="Ruan Y."/>
            <person name="Salzberg S.L."/>
            <person name="Sandelin A."/>
            <person name="Schneider C."/>
            <person name="Schoenbach C."/>
            <person name="Sekiguchi K."/>
            <person name="Semple C.A."/>
            <person name="Seno S."/>
            <person name="Sessa L."/>
            <person name="Sheng Y."/>
            <person name="Shibata Y."/>
            <person name="Shimada H."/>
            <person name="Shimada K."/>
            <person name="Silva D."/>
            <person name="Sinclair B."/>
            <person name="Sperling S."/>
            <person name="Stupka E."/>
            <person name="Sugiura K."/>
            <person name="Sultana R."/>
            <person name="Takenaka Y."/>
            <person name="Taki K."/>
            <person name="Tammoja K."/>
            <person name="Tan S.L."/>
            <person name="Tang S."/>
            <person name="Taylor M.S."/>
            <person name="Tegner J."/>
            <person name="Teichmann S.A."/>
            <person name="Ueda H.R."/>
            <person name="van Nimwegen E."/>
            <person name="Verardo R."/>
            <person name="Wei C.L."/>
            <person name="Yagi K."/>
            <person name="Yamanishi H."/>
            <person name="Zabarovsky E."/>
            <person name="Zhu S."/>
            <person name="Zimmer A."/>
            <person name="Hide W."/>
            <person name="Bult C."/>
            <person name="Grimmond S.M."/>
            <person name="Teasdale R.D."/>
            <person name="Liu E.T."/>
            <person name="Brusic V."/>
            <person name="Quackenbush J."/>
            <person name="Wahlestedt C."/>
            <person name="Mattick J.S."/>
            <person name="Hume D.A."/>
            <person name="Kai C."/>
            <person name="Sasaki D."/>
            <person name="Tomaru Y."/>
            <person name="Fukuda S."/>
            <person name="Kanamori-Katayama M."/>
            <person name="Suzuki M."/>
            <person name="Aoki J."/>
            <person name="Arakawa T."/>
            <person name="Iida J."/>
            <person name="Imamura K."/>
            <person name="Itoh M."/>
            <person name="Kato T."/>
            <person name="Kawaji H."/>
            <person name="Kawagashira N."/>
            <person name="Kawashima T."/>
            <person name="Kojima M."/>
            <person name="Kondo S."/>
            <person name="Konno H."/>
            <person name="Nakano K."/>
            <person name="Ninomiya N."/>
            <person name="Nishio T."/>
            <person name="Okada M."/>
            <person name="Plessy C."/>
            <person name="Shibata K."/>
            <person name="Shiraki T."/>
            <person name="Suzuki S."/>
            <person name="Tagami M."/>
            <person name="Waki K."/>
            <person name="Watahiki A."/>
            <person name="Okamura-Oho Y."/>
            <person name="Suzuki H."/>
            <person name="Kawai J."/>
            <person name="Hayashizaki Y."/>
        </authorList>
    </citation>
    <scope>NUCLEOTIDE SEQUENCE [LARGE SCALE MRNA]</scope>
    <source>
        <strain>C57BL/6J</strain>
        <strain>DBA/2J</strain>
        <tissue>Liver</tissue>
        <tissue>Sympathetic ganglion</tissue>
    </source>
</reference>
<feature type="chain" id="PRO_0000121334" description="DNA-directed RNA polymerases I, II, and III subunit RPABC5">
    <location>
        <begin position="1"/>
        <end position="67"/>
    </location>
</feature>
<feature type="binding site" evidence="3">
    <location>
        <position position="7"/>
    </location>
    <ligand>
        <name>Zn(2+)</name>
        <dbReference type="ChEBI" id="CHEBI:29105"/>
    </ligand>
</feature>
<feature type="binding site" evidence="3">
    <location>
        <position position="10"/>
    </location>
    <ligand>
        <name>Zn(2+)</name>
        <dbReference type="ChEBI" id="CHEBI:29105"/>
    </ligand>
</feature>
<feature type="binding site" evidence="3">
    <location>
        <position position="44"/>
    </location>
    <ligand>
        <name>Zn(2+)</name>
        <dbReference type="ChEBI" id="CHEBI:29105"/>
    </ligand>
</feature>
<feature type="binding site" evidence="3">
    <location>
        <position position="45"/>
    </location>
    <ligand>
        <name>Zn(2+)</name>
        <dbReference type="ChEBI" id="CHEBI:29105"/>
    </ligand>
</feature>
<proteinExistence type="inferred from homology"/>
<name>RPAB5_MOUSE</name>
<evidence type="ECO:0000250" key="1"/>
<evidence type="ECO:0000250" key="2">
    <source>
        <dbReference type="UniProtKB" id="P22139"/>
    </source>
</evidence>
<evidence type="ECO:0000250" key="3">
    <source>
        <dbReference type="UniProtKB" id="P62875"/>
    </source>
</evidence>
<evidence type="ECO:0000305" key="4"/>
<protein>
    <recommendedName>
        <fullName>DNA-directed RNA polymerases I, II, and III subunit RPABC5</fullName>
        <shortName>RNA polymerases I, II, and III subunit ABC5</shortName>
    </recommendedName>
    <alternativeName>
        <fullName>DNA-directed RNA polymerase III subunit L</fullName>
    </alternativeName>
    <alternativeName>
        <fullName>RPB10 homolog</fullName>
    </alternativeName>
</protein>